<accession>A4FY35</accession>
<gene>
    <name evidence="1" type="primary">dtdA</name>
    <name type="ordered locus">MmarC5_0809</name>
</gene>
<reference key="1">
    <citation type="submission" date="2007-03" db="EMBL/GenBank/DDBJ databases">
        <title>Complete sequence of chromosome of Methanococcus maripaludis C5.</title>
        <authorList>
            <consortium name="US DOE Joint Genome Institute"/>
            <person name="Copeland A."/>
            <person name="Lucas S."/>
            <person name="Lapidus A."/>
            <person name="Barry K."/>
            <person name="Glavina del Rio T."/>
            <person name="Dalin E."/>
            <person name="Tice H."/>
            <person name="Pitluck S."/>
            <person name="Chertkov O."/>
            <person name="Brettin T."/>
            <person name="Bruce D."/>
            <person name="Han C."/>
            <person name="Detter J.C."/>
            <person name="Schmutz J."/>
            <person name="Larimer F."/>
            <person name="Land M."/>
            <person name="Hauser L."/>
            <person name="Kyrpides N."/>
            <person name="Mikhailova N."/>
            <person name="Sieprawska-Lupa M."/>
            <person name="Whitman W.B."/>
            <person name="Richardson P."/>
        </authorList>
    </citation>
    <scope>NUCLEOTIDE SEQUENCE [LARGE SCALE GENOMIC DNA]</scope>
    <source>
        <strain>C5 / ATCC BAA-1333</strain>
    </source>
</reference>
<dbReference type="EC" id="3.1.1.96" evidence="1"/>
<dbReference type="EMBL" id="CP000609">
    <property type="protein sequence ID" value="ABO35119.1"/>
    <property type="molecule type" value="Genomic_DNA"/>
</dbReference>
<dbReference type="RefSeq" id="WP_011868573.1">
    <property type="nucleotide sequence ID" value="NC_009135.1"/>
</dbReference>
<dbReference type="SMR" id="A4FY35"/>
<dbReference type="STRING" id="402880.MmarC5_0809"/>
<dbReference type="GeneID" id="4928112"/>
<dbReference type="KEGG" id="mmq:MmarC5_0809"/>
<dbReference type="eggNOG" id="arCOG01616">
    <property type="taxonomic scope" value="Archaea"/>
</dbReference>
<dbReference type="HOGENOM" id="CLU_056464_1_0_2"/>
<dbReference type="OrthoDB" id="9863at2157"/>
<dbReference type="Proteomes" id="UP000000253">
    <property type="component" value="Chromosome"/>
</dbReference>
<dbReference type="GO" id="GO:0051499">
    <property type="term" value="F:D-aminoacyl-tRNA deacylase activity"/>
    <property type="evidence" value="ECO:0007669"/>
    <property type="project" value="UniProtKB-UniRule"/>
</dbReference>
<dbReference type="GO" id="GO:0008270">
    <property type="term" value="F:zinc ion binding"/>
    <property type="evidence" value="ECO:0007669"/>
    <property type="project" value="UniProtKB-UniRule"/>
</dbReference>
<dbReference type="GO" id="GO:0019478">
    <property type="term" value="P:D-amino acid catabolic process"/>
    <property type="evidence" value="ECO:0007669"/>
    <property type="project" value="UniProtKB-UniRule"/>
</dbReference>
<dbReference type="Gene3D" id="3.40.50.10700">
    <property type="entry name" value="AF0625-like"/>
    <property type="match status" value="1"/>
</dbReference>
<dbReference type="Gene3D" id="3.40.630.50">
    <property type="entry name" value="AF0625-like"/>
    <property type="match status" value="1"/>
</dbReference>
<dbReference type="HAMAP" id="MF_00562">
    <property type="entry name" value="Deacylase_DtdA"/>
    <property type="match status" value="1"/>
</dbReference>
<dbReference type="InterPro" id="IPR018033">
    <property type="entry name" value="Deacylase_DtdA_archaea"/>
</dbReference>
<dbReference type="InterPro" id="IPR007508">
    <property type="entry name" value="DtdA"/>
</dbReference>
<dbReference type="NCBIfam" id="NF003071">
    <property type="entry name" value="PRK03995.1-3"/>
    <property type="match status" value="1"/>
</dbReference>
<dbReference type="PANTHER" id="PTHR34667">
    <property type="entry name" value="D-AMINOACYL-TRNA DEACYLASE"/>
    <property type="match status" value="1"/>
</dbReference>
<dbReference type="PANTHER" id="PTHR34667:SF1">
    <property type="entry name" value="D-AMINOACYL-TRNA DEACYLASE"/>
    <property type="match status" value="1"/>
</dbReference>
<dbReference type="Pfam" id="PF04414">
    <property type="entry name" value="tRNA_deacylase"/>
    <property type="match status" value="1"/>
</dbReference>
<dbReference type="PIRSF" id="PIRSF016210">
    <property type="entry name" value="UCP016210"/>
    <property type="match status" value="1"/>
</dbReference>
<dbReference type="SUPFAM" id="SSF142535">
    <property type="entry name" value="AF0625-like"/>
    <property type="match status" value="1"/>
</dbReference>
<name>DTDA_METM5</name>
<proteinExistence type="inferred from homology"/>
<organism>
    <name type="scientific">Methanococcus maripaludis (strain C5 / ATCC BAA-1333)</name>
    <dbReference type="NCBI Taxonomy" id="402880"/>
    <lineage>
        <taxon>Archaea</taxon>
        <taxon>Methanobacteriati</taxon>
        <taxon>Methanobacteriota</taxon>
        <taxon>Methanomada group</taxon>
        <taxon>Methanococci</taxon>
        <taxon>Methanococcales</taxon>
        <taxon>Methanococcaceae</taxon>
        <taxon>Methanococcus</taxon>
    </lineage>
</organism>
<sequence>MDYLFISSKTDPASQNIKKHVQNYGYDVFEIEKKSTQSNSSDFPISEMYIFLSKHASESKKPTLTVHTPGNLTEDNSRGGNSEEISPCNPIFNTLMLQNMNKYNEMEEYQELGFDVSFEVLHHGPTDLKAPSAFVEIGSSEEQWQIDDAAEIITNSLIDTLNSIQNSEYEKKEKIIGIGGGHYSPKFTKLALKEEYYIGYLTPKHAKLSENILNQMISKQDFDFVGIDWKGLYGEDKRKYVEFFDENDISWQRV</sequence>
<comment type="function">
    <text evidence="1">D-aminoacyl-tRNA deacylase with broad substrate specificity. By recycling D-aminoacyl-tRNA to D-amino acids and free tRNA molecules, this enzyme counteracts the toxicity associated with the formation of D-aminoacyl-tRNA entities in vivo.</text>
</comment>
<comment type="catalytic activity">
    <reaction evidence="1">
        <text>a D-aminoacyl-tRNA + H2O = a tRNA + a D-alpha-amino acid + H(+)</text>
        <dbReference type="Rhea" id="RHEA:13953"/>
        <dbReference type="Rhea" id="RHEA-COMP:10123"/>
        <dbReference type="Rhea" id="RHEA-COMP:10124"/>
        <dbReference type="ChEBI" id="CHEBI:15377"/>
        <dbReference type="ChEBI" id="CHEBI:15378"/>
        <dbReference type="ChEBI" id="CHEBI:59871"/>
        <dbReference type="ChEBI" id="CHEBI:78442"/>
        <dbReference type="ChEBI" id="CHEBI:79333"/>
        <dbReference type="EC" id="3.1.1.96"/>
    </reaction>
</comment>
<comment type="catalytic activity">
    <reaction evidence="1">
        <text>glycyl-tRNA(Ala) + H2O = tRNA(Ala) + glycine + H(+)</text>
        <dbReference type="Rhea" id="RHEA:53744"/>
        <dbReference type="Rhea" id="RHEA-COMP:9657"/>
        <dbReference type="Rhea" id="RHEA-COMP:13640"/>
        <dbReference type="ChEBI" id="CHEBI:15377"/>
        <dbReference type="ChEBI" id="CHEBI:15378"/>
        <dbReference type="ChEBI" id="CHEBI:57305"/>
        <dbReference type="ChEBI" id="CHEBI:78442"/>
        <dbReference type="ChEBI" id="CHEBI:78522"/>
        <dbReference type="EC" id="3.1.1.96"/>
    </reaction>
</comment>
<comment type="cofactor">
    <cofactor evidence="1">
        <name>Zn(2+)</name>
        <dbReference type="ChEBI" id="CHEBI:29105"/>
    </cofactor>
    <text evidence="1">Binds 2 Zn(2+) ions per subunit.</text>
</comment>
<comment type="subunit">
    <text evidence="1">Monomer.</text>
</comment>
<comment type="similarity">
    <text evidence="1">Belongs to the DtdA deacylase family.</text>
</comment>
<feature type="chain" id="PRO_0000345218" description="D-aminoacyl-tRNA deacylase">
    <location>
        <begin position="1"/>
        <end position="254"/>
    </location>
</feature>
<feature type="region of interest" description="Disordered" evidence="2">
    <location>
        <begin position="61"/>
        <end position="85"/>
    </location>
</feature>
<feature type="compositionally biased region" description="Polar residues" evidence="2">
    <location>
        <begin position="65"/>
        <end position="84"/>
    </location>
</feature>
<protein>
    <recommendedName>
        <fullName evidence="1">D-aminoacyl-tRNA deacylase</fullName>
        <ecNumber evidence="1">3.1.1.96</ecNumber>
    </recommendedName>
    <alternativeName>
        <fullName>D-tyrosyl-tRNA(Tyr) deacylase</fullName>
    </alternativeName>
</protein>
<keyword id="KW-0378">Hydrolase</keyword>
<keyword id="KW-0479">Metal-binding</keyword>
<keyword id="KW-0862">Zinc</keyword>
<evidence type="ECO:0000255" key="1">
    <source>
        <dbReference type="HAMAP-Rule" id="MF_00562"/>
    </source>
</evidence>
<evidence type="ECO:0000256" key="2">
    <source>
        <dbReference type="SAM" id="MobiDB-lite"/>
    </source>
</evidence>